<name>LACS8_ARATH</name>
<organism>
    <name type="scientific">Arabidopsis thaliana</name>
    <name type="common">Mouse-ear cress</name>
    <dbReference type="NCBI Taxonomy" id="3702"/>
    <lineage>
        <taxon>Eukaryota</taxon>
        <taxon>Viridiplantae</taxon>
        <taxon>Streptophyta</taxon>
        <taxon>Embryophyta</taxon>
        <taxon>Tracheophyta</taxon>
        <taxon>Spermatophyta</taxon>
        <taxon>Magnoliopsida</taxon>
        <taxon>eudicotyledons</taxon>
        <taxon>Gunneridae</taxon>
        <taxon>Pentapetalae</taxon>
        <taxon>rosids</taxon>
        <taxon>malvids</taxon>
        <taxon>Brassicales</taxon>
        <taxon>Brassicaceae</taxon>
        <taxon>Camelineae</taxon>
        <taxon>Arabidopsis</taxon>
    </lineage>
</organism>
<comment type="function">
    <text>Activation of long-chain fatty acids for both synthesis of cellular lipids, and degradation via beta-oxidation. Preferentially uses palmitate, palmitoleate, oleate and linoleate.</text>
</comment>
<comment type="catalytic activity">
    <reaction evidence="3">
        <text>a long-chain fatty acid + ATP + CoA = a long-chain fatty acyl-CoA + AMP + diphosphate</text>
        <dbReference type="Rhea" id="RHEA:15421"/>
        <dbReference type="ChEBI" id="CHEBI:30616"/>
        <dbReference type="ChEBI" id="CHEBI:33019"/>
        <dbReference type="ChEBI" id="CHEBI:57287"/>
        <dbReference type="ChEBI" id="CHEBI:57560"/>
        <dbReference type="ChEBI" id="CHEBI:83139"/>
        <dbReference type="ChEBI" id="CHEBI:456215"/>
        <dbReference type="EC" id="6.2.1.3"/>
    </reaction>
</comment>
<comment type="cofactor">
    <cofactor evidence="1">
        <name>Mg(2+)</name>
        <dbReference type="ChEBI" id="CHEBI:18420"/>
    </cofactor>
</comment>
<comment type="pathway">
    <text>Lipid metabolism; fatty acid metabolism.</text>
</comment>
<comment type="similarity">
    <text evidence="4">Belongs to the ATP-dependent AMP-binding enzyme family.</text>
</comment>
<protein>
    <recommendedName>
        <fullName>Long chain acyl-CoA synthetase 8</fullName>
        <ecNumber>6.2.1.3</ecNumber>
    </recommendedName>
</protein>
<proteinExistence type="evidence at protein level"/>
<gene>
    <name type="primary">LACS8</name>
    <name type="ordered locus">At2g04350</name>
    <name type="ORF">T1O3</name>
    <name type="ORF">T23O15.3</name>
</gene>
<keyword id="KW-0007">Acetylation</keyword>
<keyword id="KW-0067">ATP-binding</keyword>
<keyword id="KW-0276">Fatty acid metabolism</keyword>
<keyword id="KW-0436">Ligase</keyword>
<keyword id="KW-0443">Lipid metabolism</keyword>
<keyword id="KW-0460">Magnesium</keyword>
<keyword id="KW-0547">Nucleotide-binding</keyword>
<keyword id="KW-1185">Reference proteome</keyword>
<accession>Q9SJD4</accession>
<accession>Q940V0</accession>
<sequence>MEDSGVNPMDSPSKGSDFGVYGIIGGGIVALLVPVLLSVVLNGTKKGKKRGVPIKVGGEEGYTMRHARAPELVDVPWEGAATMPALFEQSCKKYSKDRLLGTREFIDKEFITASDGRKFEKLHLGEYKWQSYGEVFERVCNFASGLVNVGHNVDDRVAIFSDTRAEWFIAFQGCFRQSITVVTIYASLGEEALIYSLNETRVSTLICDSKQLKKLSAIQSSLKTVKNIIYIEEDGVDVASSDVNSMGDITVSSISEVEKLGQKNAVQPILPSKNGVAVIMFTSGSTGLPKGVMITHGNLVATAAGVMKVVPKLDKNDTYIAYLPLAHVFELEAEIVVFTSGSAIGYGSAMTLTDTSNKVKKGTKGDVSALKPTIMTAVPAILDRVREGVLKKVEEKGGMAKTLFDFAYKRRLAAVDGSWFGAWGLEKMLWDALVFKKIRAVLGGHIRFMLVGGAPLSPDSQRFINICMGSPIGQGYGLTETCAGATFSEWDDPAVGRVGPPLPCGYVKLVSWEEGGYRISDKPMPRGEIVVGGNSVTAGYFNNQEKTDEVYKVDEKGTRWFYTGDIGRFHPDGCLEVIDRKKDIVKLQHGEYVSLGKVEAALGSSNYVDNIMVHADPINSYCVALVVPSRGALEKWAEEAGVKHSEFAELCEKGEAVKEVQQSLTKAGKAAKLEKFELPAKIKLLSEPWTPESGLVTAALKIKREQIKSKFKDELSKLYA</sequence>
<reference key="1">
    <citation type="journal article" date="2002" name="Plant Physiol.">
        <title>Arabidopsis contains nine long-chain acyl-coenzyme A synthetase genes that participate in fatty acid and glycerolipid metabolism.</title>
        <authorList>
            <person name="Shockey J.M."/>
            <person name="Fulda M.S."/>
            <person name="Browse J.A."/>
        </authorList>
    </citation>
    <scope>NUCLEOTIDE SEQUENCE [MRNA]</scope>
    <scope>GENE FAMILY</scope>
    <scope>ENZYME ACTIVITY</scope>
</reference>
<reference key="2">
    <citation type="journal article" date="1999" name="Nature">
        <title>Sequence and analysis of chromosome 2 of the plant Arabidopsis thaliana.</title>
        <authorList>
            <person name="Lin X."/>
            <person name="Kaul S."/>
            <person name="Rounsley S.D."/>
            <person name="Shea T.P."/>
            <person name="Benito M.-I."/>
            <person name="Town C.D."/>
            <person name="Fujii C.Y."/>
            <person name="Mason T.M."/>
            <person name="Bowman C.L."/>
            <person name="Barnstead M.E."/>
            <person name="Feldblyum T.V."/>
            <person name="Buell C.R."/>
            <person name="Ketchum K.A."/>
            <person name="Lee J.J."/>
            <person name="Ronning C.M."/>
            <person name="Koo H.L."/>
            <person name="Moffat K.S."/>
            <person name="Cronin L.A."/>
            <person name="Shen M."/>
            <person name="Pai G."/>
            <person name="Van Aken S."/>
            <person name="Umayam L."/>
            <person name="Tallon L.J."/>
            <person name="Gill J.E."/>
            <person name="Adams M.D."/>
            <person name="Carrera A.J."/>
            <person name="Creasy T.H."/>
            <person name="Goodman H.M."/>
            <person name="Somerville C.R."/>
            <person name="Copenhaver G.P."/>
            <person name="Preuss D."/>
            <person name="Nierman W.C."/>
            <person name="White O."/>
            <person name="Eisen J.A."/>
            <person name="Salzberg S.L."/>
            <person name="Fraser C.M."/>
            <person name="Venter J.C."/>
        </authorList>
    </citation>
    <scope>NUCLEOTIDE SEQUENCE [LARGE SCALE GENOMIC DNA]</scope>
    <source>
        <strain>cv. Columbia</strain>
    </source>
</reference>
<reference key="3">
    <citation type="journal article" date="2017" name="Plant J.">
        <title>Araport11: a complete reannotation of the Arabidopsis thaliana reference genome.</title>
        <authorList>
            <person name="Cheng C.Y."/>
            <person name="Krishnakumar V."/>
            <person name="Chan A.P."/>
            <person name="Thibaud-Nissen F."/>
            <person name="Schobel S."/>
            <person name="Town C.D."/>
        </authorList>
    </citation>
    <scope>GENOME REANNOTATION</scope>
    <source>
        <strain>cv. Columbia</strain>
    </source>
</reference>
<reference key="4">
    <citation type="journal article" date="2003" name="Science">
        <title>Empirical analysis of transcriptional activity in the Arabidopsis genome.</title>
        <authorList>
            <person name="Yamada K."/>
            <person name="Lim J."/>
            <person name="Dale J.M."/>
            <person name="Chen H."/>
            <person name="Shinn P."/>
            <person name="Palm C.J."/>
            <person name="Southwick A.M."/>
            <person name="Wu H.C."/>
            <person name="Kim C.J."/>
            <person name="Nguyen M."/>
            <person name="Pham P.K."/>
            <person name="Cheuk R.F."/>
            <person name="Karlin-Newmann G."/>
            <person name="Liu S.X."/>
            <person name="Lam B."/>
            <person name="Sakano H."/>
            <person name="Wu T."/>
            <person name="Yu G."/>
            <person name="Miranda M."/>
            <person name="Quach H.L."/>
            <person name="Tripp M."/>
            <person name="Chang C.H."/>
            <person name="Lee J.M."/>
            <person name="Toriumi M.J."/>
            <person name="Chan M.M."/>
            <person name="Tang C.C."/>
            <person name="Onodera C.S."/>
            <person name="Deng J.M."/>
            <person name="Akiyama K."/>
            <person name="Ansari Y."/>
            <person name="Arakawa T."/>
            <person name="Banh J."/>
            <person name="Banno F."/>
            <person name="Bowser L."/>
            <person name="Brooks S.Y."/>
            <person name="Carninci P."/>
            <person name="Chao Q."/>
            <person name="Choy N."/>
            <person name="Enju A."/>
            <person name="Goldsmith A.D."/>
            <person name="Gurjal M."/>
            <person name="Hansen N.F."/>
            <person name="Hayashizaki Y."/>
            <person name="Johnson-Hopson C."/>
            <person name="Hsuan V.W."/>
            <person name="Iida K."/>
            <person name="Karnes M."/>
            <person name="Khan S."/>
            <person name="Koesema E."/>
            <person name="Ishida J."/>
            <person name="Jiang P.X."/>
            <person name="Jones T."/>
            <person name="Kawai J."/>
            <person name="Kamiya A."/>
            <person name="Meyers C."/>
            <person name="Nakajima M."/>
            <person name="Narusaka M."/>
            <person name="Seki M."/>
            <person name="Sakurai T."/>
            <person name="Satou M."/>
            <person name="Tamse R."/>
            <person name="Vaysberg M."/>
            <person name="Wallender E.K."/>
            <person name="Wong C."/>
            <person name="Yamamura Y."/>
            <person name="Yuan S."/>
            <person name="Shinozaki K."/>
            <person name="Davis R.W."/>
            <person name="Theologis A."/>
            <person name="Ecker J.R."/>
        </authorList>
    </citation>
    <scope>NUCLEOTIDE SEQUENCE [LARGE SCALE MRNA]</scope>
    <source>
        <strain>cv. Columbia</strain>
    </source>
</reference>
<reference key="5">
    <citation type="journal article" date="2003" name="Plant Physiol.">
        <title>Arabidopsis contains a large superfamily of acyl-activating enzymes. Phylogenetic and biochemical analysis reveals a new class of acyl-coenzyme a synthetases.</title>
        <authorList>
            <person name="Shockey J.M."/>
            <person name="Fulda M.S."/>
            <person name="Browse J."/>
        </authorList>
    </citation>
    <scope>GENE FAMILY ORGANIZATION</scope>
</reference>
<reference key="6">
    <citation type="journal article" date="2012" name="Mol. Cell. Proteomics">
        <title>Comparative large-scale characterisation of plant vs. mammal proteins reveals similar and idiosyncratic N-alpha acetylation features.</title>
        <authorList>
            <person name="Bienvenut W.V."/>
            <person name="Sumpton D."/>
            <person name="Martinez A."/>
            <person name="Lilla S."/>
            <person name="Espagne C."/>
            <person name="Meinnel T."/>
            <person name="Giglione C."/>
        </authorList>
    </citation>
    <scope>ACETYLATION [LARGE SCALE ANALYSIS] AT MET-1</scope>
    <scope>IDENTIFICATION BY MASS SPECTROMETRY [LARGE SCALE ANALYSIS]</scope>
</reference>
<dbReference type="EC" id="6.2.1.3"/>
<dbReference type="EMBL" id="AF503758">
    <property type="protein sequence ID" value="AAM28875.1"/>
    <property type="molecule type" value="mRNA"/>
</dbReference>
<dbReference type="EMBL" id="AC006951">
    <property type="protein sequence ID" value="AAD25843.1"/>
    <property type="molecule type" value="Genomic_DNA"/>
</dbReference>
<dbReference type="EMBL" id="AC007213">
    <property type="protein sequence ID" value="AAM15458.1"/>
    <property type="molecule type" value="Genomic_DNA"/>
</dbReference>
<dbReference type="EMBL" id="CP002685">
    <property type="protein sequence ID" value="AEC05822.1"/>
    <property type="molecule type" value="Genomic_DNA"/>
</dbReference>
<dbReference type="EMBL" id="CP002685">
    <property type="protein sequence ID" value="AEC05823.1"/>
    <property type="molecule type" value="Genomic_DNA"/>
</dbReference>
<dbReference type="EMBL" id="AY052664">
    <property type="protein sequence ID" value="AAK96568.1"/>
    <property type="molecule type" value="mRNA"/>
</dbReference>
<dbReference type="EMBL" id="BT002288">
    <property type="protein sequence ID" value="AAN72299.1"/>
    <property type="molecule type" value="mRNA"/>
</dbReference>
<dbReference type="PIR" id="E84456">
    <property type="entry name" value="E84456"/>
</dbReference>
<dbReference type="RefSeq" id="NP_178516.1">
    <property type="nucleotide sequence ID" value="NM_126468.4"/>
</dbReference>
<dbReference type="RefSeq" id="NP_849934.1">
    <property type="nucleotide sequence ID" value="NM_179603.2"/>
</dbReference>
<dbReference type="SMR" id="Q9SJD4"/>
<dbReference type="BioGRID" id="375">
    <property type="interactions" value="4"/>
</dbReference>
<dbReference type="FunCoup" id="Q9SJD4">
    <property type="interactions" value="2721"/>
</dbReference>
<dbReference type="STRING" id="3702.Q9SJD4"/>
<dbReference type="iPTMnet" id="Q9SJD4"/>
<dbReference type="PaxDb" id="3702-AT2G04350.1"/>
<dbReference type="ProteomicsDB" id="237119"/>
<dbReference type="EnsemblPlants" id="AT2G04350.1">
    <property type="protein sequence ID" value="AT2G04350.1"/>
    <property type="gene ID" value="AT2G04350"/>
</dbReference>
<dbReference type="EnsemblPlants" id="AT2G04350.2">
    <property type="protein sequence ID" value="AT2G04350.2"/>
    <property type="gene ID" value="AT2G04350"/>
</dbReference>
<dbReference type="GeneID" id="814974"/>
<dbReference type="Gramene" id="AT2G04350.1">
    <property type="protein sequence ID" value="AT2G04350.1"/>
    <property type="gene ID" value="AT2G04350"/>
</dbReference>
<dbReference type="Gramene" id="AT2G04350.2">
    <property type="protein sequence ID" value="AT2G04350.2"/>
    <property type="gene ID" value="AT2G04350"/>
</dbReference>
<dbReference type="KEGG" id="ath:AT2G04350"/>
<dbReference type="Araport" id="AT2G04350"/>
<dbReference type="TAIR" id="AT2G04350">
    <property type="gene designation" value="LACS8"/>
</dbReference>
<dbReference type="eggNOG" id="KOG1180">
    <property type="taxonomic scope" value="Eukaryota"/>
</dbReference>
<dbReference type="HOGENOM" id="CLU_000022_45_2_1"/>
<dbReference type="InParanoid" id="Q9SJD4"/>
<dbReference type="OMA" id="KIFQWAA"/>
<dbReference type="PhylomeDB" id="Q9SJD4"/>
<dbReference type="BioCyc" id="ARA:AT2G04350-MONOMER"/>
<dbReference type="BioCyc" id="MetaCyc:AT2G04350-MONOMER"/>
<dbReference type="SABIO-RK" id="Q9SJD4"/>
<dbReference type="UniPathway" id="UPA00199"/>
<dbReference type="PRO" id="PR:Q9SJD4"/>
<dbReference type="Proteomes" id="UP000006548">
    <property type="component" value="Chromosome 2"/>
</dbReference>
<dbReference type="ExpressionAtlas" id="Q9SJD4">
    <property type="expression patterns" value="baseline and differential"/>
</dbReference>
<dbReference type="GO" id="GO:0009941">
    <property type="term" value="C:chloroplast envelope"/>
    <property type="evidence" value="ECO:0007005"/>
    <property type="project" value="TAIR"/>
</dbReference>
<dbReference type="GO" id="GO:0005783">
    <property type="term" value="C:endoplasmic reticulum"/>
    <property type="evidence" value="ECO:0007005"/>
    <property type="project" value="TAIR"/>
</dbReference>
<dbReference type="GO" id="GO:0005794">
    <property type="term" value="C:Golgi apparatus"/>
    <property type="evidence" value="ECO:0007005"/>
    <property type="project" value="TAIR"/>
</dbReference>
<dbReference type="GO" id="GO:0005739">
    <property type="term" value="C:mitochondrion"/>
    <property type="evidence" value="ECO:0007005"/>
    <property type="project" value="TAIR"/>
</dbReference>
<dbReference type="GO" id="GO:0005524">
    <property type="term" value="F:ATP binding"/>
    <property type="evidence" value="ECO:0007669"/>
    <property type="project" value="UniProtKB-KW"/>
</dbReference>
<dbReference type="GO" id="GO:0004467">
    <property type="term" value="F:long-chain fatty acid-CoA ligase activity"/>
    <property type="evidence" value="ECO:0000314"/>
    <property type="project" value="UniProtKB"/>
</dbReference>
<dbReference type="GO" id="GO:0006631">
    <property type="term" value="P:fatty acid metabolic process"/>
    <property type="evidence" value="ECO:0000304"/>
    <property type="project" value="UniProtKB"/>
</dbReference>
<dbReference type="CDD" id="cd17639">
    <property type="entry name" value="LC_FACS_euk1"/>
    <property type="match status" value="1"/>
</dbReference>
<dbReference type="Gene3D" id="3.40.50.12780">
    <property type="entry name" value="N-terminal domain of ligase-like"/>
    <property type="match status" value="1"/>
</dbReference>
<dbReference type="InterPro" id="IPR020845">
    <property type="entry name" value="AMP-binding_CS"/>
</dbReference>
<dbReference type="InterPro" id="IPR000873">
    <property type="entry name" value="AMP-dep_synth/lig_dom"/>
</dbReference>
<dbReference type="InterPro" id="IPR042099">
    <property type="entry name" value="ANL_N_sf"/>
</dbReference>
<dbReference type="PANTHER" id="PTHR43272:SF92">
    <property type="entry name" value="LONG CHAIN ACYL-COA SYNTHETASE 8"/>
    <property type="match status" value="1"/>
</dbReference>
<dbReference type="PANTHER" id="PTHR43272">
    <property type="entry name" value="LONG-CHAIN-FATTY-ACID--COA LIGASE"/>
    <property type="match status" value="1"/>
</dbReference>
<dbReference type="Pfam" id="PF00501">
    <property type="entry name" value="AMP-binding"/>
    <property type="match status" value="1"/>
</dbReference>
<dbReference type="SUPFAM" id="SSF56801">
    <property type="entry name" value="Acetyl-CoA synthetase-like"/>
    <property type="match status" value="1"/>
</dbReference>
<dbReference type="PROSITE" id="PS00455">
    <property type="entry name" value="AMP_BINDING"/>
    <property type="match status" value="1"/>
</dbReference>
<feature type="chain" id="PRO_0000401417" description="Long chain acyl-CoA synthetase 8">
    <location>
        <begin position="1"/>
        <end position="720"/>
    </location>
</feature>
<feature type="region of interest" description="Fatty acid-binding" evidence="2">
    <location>
        <begin position="554"/>
        <end position="582"/>
    </location>
</feature>
<feature type="binding site" evidence="2">
    <location>
        <begin position="279"/>
        <end position="290"/>
    </location>
    <ligand>
        <name>ATP</name>
        <dbReference type="ChEBI" id="CHEBI:30616"/>
    </ligand>
</feature>
<feature type="modified residue" description="N-acetylmethionine" evidence="5">
    <location>
        <position position="1"/>
    </location>
</feature>
<feature type="sequence conflict" description="In Ref. 4; AAK96568." evidence="4" ref="4">
    <original>EVEKLGQK</original>
    <variation>DFFKLPPH</variation>
    <location>
        <begin position="256"/>
        <end position="263"/>
    </location>
</feature>
<evidence type="ECO:0000250" key="1"/>
<evidence type="ECO:0000255" key="2"/>
<evidence type="ECO:0000269" key="3">
    <source>
    </source>
</evidence>
<evidence type="ECO:0000305" key="4"/>
<evidence type="ECO:0007744" key="5">
    <source>
    </source>
</evidence>